<evidence type="ECO:0000250" key="1"/>
<evidence type="ECO:0000255" key="2"/>
<evidence type="ECO:0000255" key="3">
    <source>
        <dbReference type="PROSITE-ProRule" id="PRU00277"/>
    </source>
</evidence>
<evidence type="ECO:0000255" key="4">
    <source>
        <dbReference type="PROSITE-ProRule" id="PRU10138"/>
    </source>
</evidence>
<evidence type="ECO:0000305" key="5"/>
<protein>
    <recommendedName>
        <fullName>Peptidyl-prolyl cis-trans isomerase FKBP15-1</fullName>
        <shortName>PPIase FKBP15-1</shortName>
        <ecNumber>5.2.1.8</ecNumber>
    </recommendedName>
    <alternativeName>
        <fullName>15 kDa FK506-binding protein</fullName>
        <shortName>15 kDa FKBP</shortName>
    </alternativeName>
    <alternativeName>
        <fullName>FK506-binding protein 15-1</fullName>
        <shortName>AtFKBP15-1</shortName>
    </alternativeName>
    <alternativeName>
        <fullName>FK506-binding protein 2-1</fullName>
    </alternativeName>
    <alternativeName>
        <fullName>Immunophilin FKBP15-1</fullName>
    </alternativeName>
    <alternativeName>
        <fullName>Rotamase</fullName>
    </alternativeName>
</protein>
<proteinExistence type="evidence at transcript level"/>
<dbReference type="EC" id="5.2.1.8"/>
<dbReference type="EMBL" id="U52046">
    <property type="protein sequence ID" value="AAC49390.1"/>
    <property type="status" value="ALT_INIT"/>
    <property type="molecule type" value="mRNA"/>
</dbReference>
<dbReference type="EMBL" id="AB026647">
    <property type="protein sequence ID" value="BAB02081.1"/>
    <property type="molecule type" value="Genomic_DNA"/>
</dbReference>
<dbReference type="EMBL" id="CP002686">
    <property type="protein sequence ID" value="AEE76994.1"/>
    <property type="molecule type" value="Genomic_DNA"/>
</dbReference>
<dbReference type="EMBL" id="AY062776">
    <property type="protein sequence ID" value="AAL32854.1"/>
    <property type="molecule type" value="mRNA"/>
</dbReference>
<dbReference type="EMBL" id="AY128760">
    <property type="protein sequence ID" value="AAM91160.1"/>
    <property type="molecule type" value="mRNA"/>
</dbReference>
<dbReference type="EMBL" id="AY088043">
    <property type="protein sequence ID" value="AAM65589.1"/>
    <property type="status" value="ALT_INIT"/>
    <property type="molecule type" value="mRNA"/>
</dbReference>
<dbReference type="PIR" id="S71237">
    <property type="entry name" value="S71237"/>
</dbReference>
<dbReference type="RefSeq" id="NP_566762.1">
    <property type="nucleotide sequence ID" value="NM_113428.3"/>
</dbReference>
<dbReference type="SMR" id="Q38935"/>
<dbReference type="BioGRID" id="7446">
    <property type="interactions" value="7"/>
</dbReference>
<dbReference type="FunCoup" id="Q38935">
    <property type="interactions" value="3030"/>
</dbReference>
<dbReference type="IntAct" id="Q38935">
    <property type="interactions" value="7"/>
</dbReference>
<dbReference type="STRING" id="3702.Q38935"/>
<dbReference type="PaxDb" id="3702-AT3G25220.1"/>
<dbReference type="ProteomicsDB" id="230521"/>
<dbReference type="DNASU" id="822115"/>
<dbReference type="EnsemblPlants" id="AT3G25220.1">
    <property type="protein sequence ID" value="AT3G25220.1"/>
    <property type="gene ID" value="AT3G25220"/>
</dbReference>
<dbReference type="GeneID" id="822115"/>
<dbReference type="Gramene" id="AT3G25220.1">
    <property type="protein sequence ID" value="AT3G25220.1"/>
    <property type="gene ID" value="AT3G25220"/>
</dbReference>
<dbReference type="KEGG" id="ath:AT3G25220"/>
<dbReference type="Araport" id="AT3G25220"/>
<dbReference type="TAIR" id="AT3G25220">
    <property type="gene designation" value="FKBP15-1"/>
</dbReference>
<dbReference type="eggNOG" id="KOG0549">
    <property type="taxonomic scope" value="Eukaryota"/>
</dbReference>
<dbReference type="HOGENOM" id="CLU_013615_8_2_1"/>
<dbReference type="InParanoid" id="Q38935"/>
<dbReference type="OMA" id="GHELLMH"/>
<dbReference type="OrthoDB" id="1902587at2759"/>
<dbReference type="PhylomeDB" id="Q38935"/>
<dbReference type="CD-CODE" id="4299E36E">
    <property type="entry name" value="Nucleolus"/>
</dbReference>
<dbReference type="PRO" id="PR:Q38935"/>
<dbReference type="Proteomes" id="UP000006548">
    <property type="component" value="Chromosome 3"/>
</dbReference>
<dbReference type="ExpressionAtlas" id="Q38935">
    <property type="expression patterns" value="baseline and differential"/>
</dbReference>
<dbReference type="GO" id="GO:0005829">
    <property type="term" value="C:cytosol"/>
    <property type="evidence" value="ECO:0007005"/>
    <property type="project" value="TAIR"/>
</dbReference>
<dbReference type="GO" id="GO:0005783">
    <property type="term" value="C:endoplasmic reticulum"/>
    <property type="evidence" value="ECO:0007005"/>
    <property type="project" value="TAIR"/>
</dbReference>
<dbReference type="GO" id="GO:0005788">
    <property type="term" value="C:endoplasmic reticulum lumen"/>
    <property type="evidence" value="ECO:0007669"/>
    <property type="project" value="UniProtKB-SubCell"/>
</dbReference>
<dbReference type="GO" id="GO:0099503">
    <property type="term" value="C:secretory vesicle"/>
    <property type="evidence" value="ECO:0007005"/>
    <property type="project" value="TAIR"/>
</dbReference>
<dbReference type="GO" id="GO:0003755">
    <property type="term" value="F:peptidyl-prolyl cis-trans isomerase activity"/>
    <property type="evidence" value="ECO:0007669"/>
    <property type="project" value="UniProtKB-KW"/>
</dbReference>
<dbReference type="GO" id="GO:0061077">
    <property type="term" value="P:chaperone-mediated protein folding"/>
    <property type="evidence" value="ECO:0007669"/>
    <property type="project" value="InterPro"/>
</dbReference>
<dbReference type="FunFam" id="3.10.50.40:FF:000016">
    <property type="entry name" value="Peptidylprolyl isomerase"/>
    <property type="match status" value="1"/>
</dbReference>
<dbReference type="Gene3D" id="3.10.50.40">
    <property type="match status" value="1"/>
</dbReference>
<dbReference type="InterPro" id="IPR044609">
    <property type="entry name" value="FKBP2/11"/>
</dbReference>
<dbReference type="InterPro" id="IPR046357">
    <property type="entry name" value="PPIase_dom_sf"/>
</dbReference>
<dbReference type="InterPro" id="IPR001179">
    <property type="entry name" value="PPIase_FKBP_dom"/>
</dbReference>
<dbReference type="PANTHER" id="PTHR45779:SF6">
    <property type="entry name" value="PEPTIDYL-PROLYL CIS-TRANS ISOMERASE FKBP15-1"/>
    <property type="match status" value="1"/>
</dbReference>
<dbReference type="PANTHER" id="PTHR45779">
    <property type="entry name" value="PEPTIDYLPROLYL ISOMERASE"/>
    <property type="match status" value="1"/>
</dbReference>
<dbReference type="Pfam" id="PF00254">
    <property type="entry name" value="FKBP_C"/>
    <property type="match status" value="1"/>
</dbReference>
<dbReference type="SUPFAM" id="SSF54534">
    <property type="entry name" value="FKBP-like"/>
    <property type="match status" value="1"/>
</dbReference>
<dbReference type="PROSITE" id="PS00014">
    <property type="entry name" value="ER_TARGET"/>
    <property type="match status" value="1"/>
</dbReference>
<dbReference type="PROSITE" id="PS50059">
    <property type="entry name" value="FKBP_PPIASE"/>
    <property type="match status" value="1"/>
</dbReference>
<accession>Q38935</accession>
<accession>Q8LA41</accession>
<accession>Q9LSF4</accession>
<keyword id="KW-0256">Endoplasmic reticulum</keyword>
<keyword id="KW-0413">Isomerase</keyword>
<keyword id="KW-1185">Reference proteome</keyword>
<keyword id="KW-0697">Rotamase</keyword>
<keyword id="KW-0732">Signal</keyword>
<gene>
    <name type="primary">FKBP15-1</name>
    <name type="ordered locus">At3g25220</name>
    <name type="ORF">MJL12.17</name>
</gene>
<sequence length="153" mass="16355">MMSSASAMKAVGFLLLLTILTLAYAKKSGDVTELQIGVKYKPQKCDLQAHKGDKIKVHYRGKLTDGTVFDSSFERGDPIEFELGTGQVIPGWDQGLLGACVGEKRKLKIPSKLGYGDNGSPPKIPGGATLIFDTELVAVNGEPSSEAKSKNEL</sequence>
<organism>
    <name type="scientific">Arabidopsis thaliana</name>
    <name type="common">Mouse-ear cress</name>
    <dbReference type="NCBI Taxonomy" id="3702"/>
    <lineage>
        <taxon>Eukaryota</taxon>
        <taxon>Viridiplantae</taxon>
        <taxon>Streptophyta</taxon>
        <taxon>Embryophyta</taxon>
        <taxon>Tracheophyta</taxon>
        <taxon>Spermatophyta</taxon>
        <taxon>Magnoliopsida</taxon>
        <taxon>eudicotyledons</taxon>
        <taxon>Gunneridae</taxon>
        <taxon>Pentapetalae</taxon>
        <taxon>rosids</taxon>
        <taxon>malvids</taxon>
        <taxon>Brassicales</taxon>
        <taxon>Brassicaceae</taxon>
        <taxon>Camelineae</taxon>
        <taxon>Arabidopsis</taxon>
    </lineage>
</organism>
<reference key="1">
    <citation type="journal article" date="1996" name="Proc. Natl. Acad. Sci. U.S.A.">
        <title>Molecular characterization of a FKBP-type immunophilin from higher plants.</title>
        <authorList>
            <person name="Luan S."/>
            <person name="Kudla J."/>
            <person name="Gruissem W."/>
            <person name="Schreiber S.L."/>
        </authorList>
    </citation>
    <scope>NUCLEOTIDE SEQUENCE [MRNA]</scope>
    <source>
        <strain>cv. Columbia</strain>
    </source>
</reference>
<reference key="2">
    <citation type="journal article" date="2000" name="DNA Res.">
        <title>Structural analysis of Arabidopsis thaliana chromosome 3. I. Sequence features of the regions of 4,504,864 bp covered by sixty P1 and TAC clones.</title>
        <authorList>
            <person name="Sato S."/>
            <person name="Nakamura Y."/>
            <person name="Kaneko T."/>
            <person name="Katoh T."/>
            <person name="Asamizu E."/>
            <person name="Tabata S."/>
        </authorList>
    </citation>
    <scope>NUCLEOTIDE SEQUENCE [LARGE SCALE GENOMIC DNA]</scope>
    <source>
        <strain>cv. Columbia</strain>
    </source>
</reference>
<reference key="3">
    <citation type="journal article" date="2017" name="Plant J.">
        <title>Araport11: a complete reannotation of the Arabidopsis thaliana reference genome.</title>
        <authorList>
            <person name="Cheng C.Y."/>
            <person name="Krishnakumar V."/>
            <person name="Chan A.P."/>
            <person name="Thibaud-Nissen F."/>
            <person name="Schobel S."/>
            <person name="Town C.D."/>
        </authorList>
    </citation>
    <scope>GENOME REANNOTATION</scope>
    <source>
        <strain>cv. Columbia</strain>
    </source>
</reference>
<reference key="4">
    <citation type="journal article" date="2003" name="Science">
        <title>Empirical analysis of transcriptional activity in the Arabidopsis genome.</title>
        <authorList>
            <person name="Yamada K."/>
            <person name="Lim J."/>
            <person name="Dale J.M."/>
            <person name="Chen H."/>
            <person name="Shinn P."/>
            <person name="Palm C.J."/>
            <person name="Southwick A.M."/>
            <person name="Wu H.C."/>
            <person name="Kim C.J."/>
            <person name="Nguyen M."/>
            <person name="Pham P.K."/>
            <person name="Cheuk R.F."/>
            <person name="Karlin-Newmann G."/>
            <person name="Liu S.X."/>
            <person name="Lam B."/>
            <person name="Sakano H."/>
            <person name="Wu T."/>
            <person name="Yu G."/>
            <person name="Miranda M."/>
            <person name="Quach H.L."/>
            <person name="Tripp M."/>
            <person name="Chang C.H."/>
            <person name="Lee J.M."/>
            <person name="Toriumi M.J."/>
            <person name="Chan M.M."/>
            <person name="Tang C.C."/>
            <person name="Onodera C.S."/>
            <person name="Deng J.M."/>
            <person name="Akiyama K."/>
            <person name="Ansari Y."/>
            <person name="Arakawa T."/>
            <person name="Banh J."/>
            <person name="Banno F."/>
            <person name="Bowser L."/>
            <person name="Brooks S.Y."/>
            <person name="Carninci P."/>
            <person name="Chao Q."/>
            <person name="Choy N."/>
            <person name="Enju A."/>
            <person name="Goldsmith A.D."/>
            <person name="Gurjal M."/>
            <person name="Hansen N.F."/>
            <person name="Hayashizaki Y."/>
            <person name="Johnson-Hopson C."/>
            <person name="Hsuan V.W."/>
            <person name="Iida K."/>
            <person name="Karnes M."/>
            <person name="Khan S."/>
            <person name="Koesema E."/>
            <person name="Ishida J."/>
            <person name="Jiang P.X."/>
            <person name="Jones T."/>
            <person name="Kawai J."/>
            <person name="Kamiya A."/>
            <person name="Meyers C."/>
            <person name="Nakajima M."/>
            <person name="Narusaka M."/>
            <person name="Seki M."/>
            <person name="Sakurai T."/>
            <person name="Satou M."/>
            <person name="Tamse R."/>
            <person name="Vaysberg M."/>
            <person name="Wallender E.K."/>
            <person name="Wong C."/>
            <person name="Yamamura Y."/>
            <person name="Yuan S."/>
            <person name="Shinozaki K."/>
            <person name="Davis R.W."/>
            <person name="Theologis A."/>
            <person name="Ecker J.R."/>
        </authorList>
    </citation>
    <scope>NUCLEOTIDE SEQUENCE [LARGE SCALE MRNA]</scope>
    <source>
        <strain>cv. Columbia</strain>
    </source>
</reference>
<reference key="5">
    <citation type="submission" date="2002-03" db="EMBL/GenBank/DDBJ databases">
        <title>Full-length cDNA from Arabidopsis thaliana.</title>
        <authorList>
            <person name="Brover V.V."/>
            <person name="Troukhan M.E."/>
            <person name="Alexandrov N.A."/>
            <person name="Lu Y.-P."/>
            <person name="Flavell R.B."/>
            <person name="Feldmann K.A."/>
        </authorList>
    </citation>
    <scope>NUCLEOTIDE SEQUENCE [LARGE SCALE MRNA]</scope>
</reference>
<reference key="6">
    <citation type="journal article" date="2004" name="Plant Physiol.">
        <title>Immunophilins and parvulins. Superfamily of peptidyl prolyl isomerases in Arabidopsis.</title>
        <authorList>
            <person name="He Z."/>
            <person name="Li L."/>
            <person name="Luan S."/>
        </authorList>
    </citation>
    <scope>GENE FAMILY</scope>
    <scope>NOMENCLATURE</scope>
</reference>
<comment type="function">
    <text evidence="1">PPIases accelerate the folding of proteins. It catalyzes the cis-trans isomerization of proline imidic peptide bonds in oligopeptides (By similarity).</text>
</comment>
<comment type="catalytic activity">
    <reaction>
        <text>[protein]-peptidylproline (omega=180) = [protein]-peptidylproline (omega=0)</text>
        <dbReference type="Rhea" id="RHEA:16237"/>
        <dbReference type="Rhea" id="RHEA-COMP:10747"/>
        <dbReference type="Rhea" id="RHEA-COMP:10748"/>
        <dbReference type="ChEBI" id="CHEBI:83833"/>
        <dbReference type="ChEBI" id="CHEBI:83834"/>
        <dbReference type="EC" id="5.2.1.8"/>
    </reaction>
</comment>
<comment type="subcellular location">
    <subcellularLocation>
        <location evidence="4">Endoplasmic reticulum lumen</location>
    </subcellularLocation>
</comment>
<comment type="similarity">
    <text evidence="5">Belongs to the FKBP-type PPIase family.</text>
</comment>
<comment type="sequence caution" evidence="5">
    <conflict type="erroneous initiation">
        <sequence resource="EMBL-CDS" id="AAC49390"/>
    </conflict>
    <text>Truncated N-terminus.</text>
</comment>
<comment type="sequence caution" evidence="5">
    <conflict type="erroneous initiation">
        <sequence resource="EMBL-CDS" id="AAM65589"/>
    </conflict>
    <text>Truncated N-terminus.</text>
</comment>
<name>FK151_ARATH</name>
<feature type="signal peptide" evidence="2">
    <location>
        <begin position="1"/>
        <end position="25"/>
    </location>
</feature>
<feature type="chain" id="PRO_0000025508" description="Peptidyl-prolyl cis-trans isomerase FKBP15-1">
    <location>
        <begin position="26"/>
        <end position="153"/>
    </location>
</feature>
<feature type="domain" description="PPIase FKBP-type" evidence="3">
    <location>
        <begin position="52"/>
        <end position="140"/>
    </location>
</feature>
<feature type="short sequence motif" description="Prevents secretion from ER" evidence="4">
    <location>
        <begin position="150"/>
        <end position="153"/>
    </location>
</feature>
<feature type="sequence conflict" description="In Ref. 5; AAM65589." evidence="5" ref="5">
    <original>S</original>
    <variation>I</variation>
    <location>
        <position position="72"/>
    </location>
</feature>